<accession>B3H1F9</accession>
<name>UBIA_ACTP7</name>
<comment type="function">
    <text evidence="1">Catalyzes the prenylation of para-hydroxybenzoate (PHB) with an all-trans polyprenyl group. Mediates the second step in the final reaction sequence of ubiquinone-8 (UQ-8) biosynthesis, which is the condensation of the polyisoprenoid side chain with PHB, generating the first membrane-bound Q intermediate 3-octaprenyl-4-hydroxybenzoate.</text>
</comment>
<comment type="catalytic activity">
    <reaction evidence="1">
        <text>all-trans-octaprenyl diphosphate + 4-hydroxybenzoate = 4-hydroxy-3-(all-trans-octaprenyl)benzoate + diphosphate</text>
        <dbReference type="Rhea" id="RHEA:27782"/>
        <dbReference type="ChEBI" id="CHEBI:1617"/>
        <dbReference type="ChEBI" id="CHEBI:17879"/>
        <dbReference type="ChEBI" id="CHEBI:33019"/>
        <dbReference type="ChEBI" id="CHEBI:57711"/>
        <dbReference type="EC" id="2.5.1.39"/>
    </reaction>
</comment>
<comment type="cofactor">
    <cofactor evidence="1">
        <name>Mg(2+)</name>
        <dbReference type="ChEBI" id="CHEBI:18420"/>
    </cofactor>
</comment>
<comment type="pathway">
    <text evidence="1">Cofactor biosynthesis; ubiquinone biosynthesis.</text>
</comment>
<comment type="subcellular location">
    <subcellularLocation>
        <location evidence="1">Cell inner membrane</location>
        <topology evidence="1">Multi-pass membrane protein</topology>
    </subcellularLocation>
</comment>
<comment type="similarity">
    <text evidence="1">Belongs to the UbiA prenyltransferase family.</text>
</comment>
<protein>
    <recommendedName>
        <fullName evidence="1">4-hydroxybenzoate octaprenyltransferase</fullName>
        <ecNumber evidence="1">2.5.1.39</ecNumber>
    </recommendedName>
    <alternativeName>
        <fullName evidence="1">4-HB polyprenyltransferase</fullName>
    </alternativeName>
</protein>
<gene>
    <name evidence="1" type="primary">ubiA</name>
    <name type="ordered locus">APP7_0879</name>
</gene>
<reference key="1">
    <citation type="submission" date="2008-06" db="EMBL/GenBank/DDBJ databases">
        <title>Genome and proteome analysis of A. pleuropneumoniae serotype 7.</title>
        <authorList>
            <person name="Linke B."/>
            <person name="Buettner F."/>
            <person name="Martinez-Arias R."/>
            <person name="Goesmann A."/>
            <person name="Baltes N."/>
            <person name="Tegetmeyer H."/>
            <person name="Singh M."/>
            <person name="Gerlach G.F."/>
        </authorList>
    </citation>
    <scope>NUCLEOTIDE SEQUENCE [LARGE SCALE GENOMIC DNA]</scope>
    <source>
        <strain>AP76</strain>
    </source>
</reference>
<evidence type="ECO:0000255" key="1">
    <source>
        <dbReference type="HAMAP-Rule" id="MF_01635"/>
    </source>
</evidence>
<organism>
    <name type="scientific">Actinobacillus pleuropneumoniae serotype 7 (strain AP76)</name>
    <dbReference type="NCBI Taxonomy" id="537457"/>
    <lineage>
        <taxon>Bacteria</taxon>
        <taxon>Pseudomonadati</taxon>
        <taxon>Pseudomonadota</taxon>
        <taxon>Gammaproteobacteria</taxon>
        <taxon>Pasteurellales</taxon>
        <taxon>Pasteurellaceae</taxon>
        <taxon>Actinobacillus</taxon>
    </lineage>
</organism>
<dbReference type="EC" id="2.5.1.39" evidence="1"/>
<dbReference type="EMBL" id="CP001091">
    <property type="protein sequence ID" value="ACE61531.1"/>
    <property type="molecule type" value="Genomic_DNA"/>
</dbReference>
<dbReference type="RefSeq" id="WP_005601109.1">
    <property type="nucleotide sequence ID" value="NC_010939.1"/>
</dbReference>
<dbReference type="SMR" id="B3H1F9"/>
<dbReference type="KEGG" id="apa:APP7_0879"/>
<dbReference type="HOGENOM" id="CLU_034879_1_0_6"/>
<dbReference type="UniPathway" id="UPA00232"/>
<dbReference type="Proteomes" id="UP000001226">
    <property type="component" value="Chromosome"/>
</dbReference>
<dbReference type="GO" id="GO:0005886">
    <property type="term" value="C:plasma membrane"/>
    <property type="evidence" value="ECO:0007669"/>
    <property type="project" value="UniProtKB-SubCell"/>
</dbReference>
<dbReference type="GO" id="GO:0008412">
    <property type="term" value="F:4-hydroxybenzoate polyprenyltransferase activity"/>
    <property type="evidence" value="ECO:0007669"/>
    <property type="project" value="UniProtKB-UniRule"/>
</dbReference>
<dbReference type="GO" id="GO:0006744">
    <property type="term" value="P:ubiquinone biosynthetic process"/>
    <property type="evidence" value="ECO:0007669"/>
    <property type="project" value="UniProtKB-UniRule"/>
</dbReference>
<dbReference type="CDD" id="cd13959">
    <property type="entry name" value="PT_UbiA_COQ2"/>
    <property type="match status" value="1"/>
</dbReference>
<dbReference type="FunFam" id="1.10.357.140:FF:000002">
    <property type="entry name" value="4-hydroxybenzoate octaprenyltransferase"/>
    <property type="match status" value="1"/>
</dbReference>
<dbReference type="FunFam" id="1.20.120.1780:FF:000001">
    <property type="entry name" value="4-hydroxybenzoate octaprenyltransferase"/>
    <property type="match status" value="1"/>
</dbReference>
<dbReference type="Gene3D" id="1.10.357.140">
    <property type="entry name" value="UbiA prenyltransferase"/>
    <property type="match status" value="1"/>
</dbReference>
<dbReference type="Gene3D" id="1.20.120.1780">
    <property type="entry name" value="UbiA prenyltransferase"/>
    <property type="match status" value="1"/>
</dbReference>
<dbReference type="HAMAP" id="MF_01635">
    <property type="entry name" value="UbiA"/>
    <property type="match status" value="1"/>
</dbReference>
<dbReference type="InterPro" id="IPR006370">
    <property type="entry name" value="HB_polyprenyltransferase-like"/>
</dbReference>
<dbReference type="InterPro" id="IPR039653">
    <property type="entry name" value="Prenyltransferase"/>
</dbReference>
<dbReference type="InterPro" id="IPR000537">
    <property type="entry name" value="UbiA_prenyltransferase"/>
</dbReference>
<dbReference type="InterPro" id="IPR030470">
    <property type="entry name" value="UbiA_prenylTrfase_CS"/>
</dbReference>
<dbReference type="InterPro" id="IPR044878">
    <property type="entry name" value="UbiA_sf"/>
</dbReference>
<dbReference type="NCBIfam" id="TIGR01474">
    <property type="entry name" value="ubiA_proteo"/>
    <property type="match status" value="1"/>
</dbReference>
<dbReference type="PANTHER" id="PTHR11048:SF28">
    <property type="entry name" value="4-HYDROXYBENZOATE POLYPRENYLTRANSFERASE, MITOCHONDRIAL"/>
    <property type="match status" value="1"/>
</dbReference>
<dbReference type="PANTHER" id="PTHR11048">
    <property type="entry name" value="PRENYLTRANSFERASES"/>
    <property type="match status" value="1"/>
</dbReference>
<dbReference type="Pfam" id="PF01040">
    <property type="entry name" value="UbiA"/>
    <property type="match status" value="1"/>
</dbReference>
<dbReference type="PROSITE" id="PS00943">
    <property type="entry name" value="UBIA"/>
    <property type="match status" value="1"/>
</dbReference>
<sequence>MTTFFQQHFSRNKWLAYAQLMRFDKPIGTLLLLHPTLWALFAAAGGMPPLSVLVIFVLGVIVMRAAGCVINDYADRHIDGEVKRTSQRPLATGRVTTTEAKILFVLLLCIAFVLDLLLNRYTFLLSFVAVALAIIYPFMKRFTHLPQVVLGMAFGWAIPMAYGAVSESLPLECWLLFFANIFWTVAYDTQYAMVDRDDDLRIGVKSTAILFAQYDNKIIALLQFITLVLLVIFGWISQYHWGYFVVLGLSASLFSHQCWLTKQRVREQCFKAFLNNHYFGLGVFFAILVGIYA</sequence>
<keyword id="KW-0997">Cell inner membrane</keyword>
<keyword id="KW-1003">Cell membrane</keyword>
<keyword id="KW-0460">Magnesium</keyword>
<keyword id="KW-0472">Membrane</keyword>
<keyword id="KW-0808">Transferase</keyword>
<keyword id="KW-0812">Transmembrane</keyword>
<keyword id="KW-1133">Transmembrane helix</keyword>
<keyword id="KW-0831">Ubiquinone biosynthesis</keyword>
<feature type="chain" id="PRO_1000186653" description="4-hydroxybenzoate octaprenyltransferase">
    <location>
        <begin position="1"/>
        <end position="293"/>
    </location>
</feature>
<feature type="transmembrane region" description="Helical" evidence="1">
    <location>
        <begin position="41"/>
        <end position="61"/>
    </location>
</feature>
<feature type="transmembrane region" description="Helical" evidence="1">
    <location>
        <begin position="98"/>
        <end position="118"/>
    </location>
</feature>
<feature type="transmembrane region" description="Helical" evidence="1">
    <location>
        <begin position="122"/>
        <end position="142"/>
    </location>
</feature>
<feature type="transmembrane region" description="Helical" evidence="1">
    <location>
        <begin position="145"/>
        <end position="165"/>
    </location>
</feature>
<feature type="transmembrane region" description="Helical" evidence="1">
    <location>
        <begin position="167"/>
        <end position="187"/>
    </location>
</feature>
<feature type="transmembrane region" description="Helical" evidence="1">
    <location>
        <begin position="218"/>
        <end position="238"/>
    </location>
</feature>
<feature type="transmembrane region" description="Helical" evidence="1">
    <location>
        <begin position="241"/>
        <end position="261"/>
    </location>
</feature>
<feature type="transmembrane region" description="Helical" evidence="1">
    <location>
        <begin position="272"/>
        <end position="292"/>
    </location>
</feature>
<proteinExistence type="inferred from homology"/>